<comment type="function">
    <text evidence="1">Necessary for normal cell division and for the maintenance of normal septation.</text>
</comment>
<comment type="cofactor">
    <cofactor evidence="1">
        <name>Mg(2+)</name>
        <dbReference type="ChEBI" id="CHEBI:18420"/>
    </cofactor>
</comment>
<comment type="similarity">
    <text evidence="1">Belongs to the TRAFAC class TrmE-Era-EngA-EngB-Septin-like GTPase superfamily. EngB GTPase family.</text>
</comment>
<evidence type="ECO:0000255" key="1">
    <source>
        <dbReference type="HAMAP-Rule" id="MF_00321"/>
    </source>
</evidence>
<organism>
    <name type="scientific">Pseudomonas fluorescens (strain Pf0-1)</name>
    <dbReference type="NCBI Taxonomy" id="205922"/>
    <lineage>
        <taxon>Bacteria</taxon>
        <taxon>Pseudomonadati</taxon>
        <taxon>Pseudomonadota</taxon>
        <taxon>Gammaproteobacteria</taxon>
        <taxon>Pseudomonadales</taxon>
        <taxon>Pseudomonadaceae</taxon>
        <taxon>Pseudomonas</taxon>
    </lineage>
</organism>
<reference key="1">
    <citation type="journal article" date="2009" name="Genome Biol.">
        <title>Genomic and genetic analyses of diversity and plant interactions of Pseudomonas fluorescens.</title>
        <authorList>
            <person name="Silby M.W."/>
            <person name="Cerdeno-Tarraga A.M."/>
            <person name="Vernikos G.S."/>
            <person name="Giddens S.R."/>
            <person name="Jackson R.W."/>
            <person name="Preston G.M."/>
            <person name="Zhang X.-X."/>
            <person name="Moon C.D."/>
            <person name="Gehrig S.M."/>
            <person name="Godfrey S.A.C."/>
            <person name="Knight C.G."/>
            <person name="Malone J.G."/>
            <person name="Robinson Z."/>
            <person name="Spiers A.J."/>
            <person name="Harris S."/>
            <person name="Challis G.L."/>
            <person name="Yaxley A.M."/>
            <person name="Harris D."/>
            <person name="Seeger K."/>
            <person name="Murphy L."/>
            <person name="Rutter S."/>
            <person name="Squares R."/>
            <person name="Quail M.A."/>
            <person name="Saunders E."/>
            <person name="Mavromatis K."/>
            <person name="Brettin T.S."/>
            <person name="Bentley S.D."/>
            <person name="Hothersall J."/>
            <person name="Stephens E."/>
            <person name="Thomas C.M."/>
            <person name="Parkhill J."/>
            <person name="Levy S.B."/>
            <person name="Rainey P.B."/>
            <person name="Thomson N.R."/>
        </authorList>
    </citation>
    <scope>NUCLEOTIDE SEQUENCE [LARGE SCALE GENOMIC DNA]</scope>
    <source>
        <strain>Pf0-1</strain>
    </source>
</reference>
<gene>
    <name evidence="1" type="primary">engB</name>
    <name type="ordered locus">Pfl01_0055</name>
</gene>
<sequence>MQLKNPILGLCQQSTFMLSAAKVDQCPDDEGFEVAFAGRSNAGKSSALNTLTHASLARTSKTPGRTQLLNFFKLDDERRLVDLPGYGYAKVPIPLKQHWQRHLEAYLGGRESLKGLILMMDIRHPMTDFDLLMLDWAVAAGMPMHILLTKADKLTYGAAKNTLLKVQSEIRKGWGDQVTIQLFSAPKRMGLEEAYTVLAGWMELADKGAELPAE</sequence>
<dbReference type="EMBL" id="CP000094">
    <property type="protein sequence ID" value="ABA71799.1"/>
    <property type="molecule type" value="Genomic_DNA"/>
</dbReference>
<dbReference type="SMR" id="Q3KKA7"/>
<dbReference type="KEGG" id="pfo:Pfl01_0055"/>
<dbReference type="eggNOG" id="COG0218">
    <property type="taxonomic scope" value="Bacteria"/>
</dbReference>
<dbReference type="HOGENOM" id="CLU_033732_1_0_6"/>
<dbReference type="Proteomes" id="UP000002704">
    <property type="component" value="Chromosome"/>
</dbReference>
<dbReference type="GO" id="GO:0005829">
    <property type="term" value="C:cytosol"/>
    <property type="evidence" value="ECO:0007669"/>
    <property type="project" value="TreeGrafter"/>
</dbReference>
<dbReference type="GO" id="GO:0005525">
    <property type="term" value="F:GTP binding"/>
    <property type="evidence" value="ECO:0007669"/>
    <property type="project" value="UniProtKB-UniRule"/>
</dbReference>
<dbReference type="GO" id="GO:0046872">
    <property type="term" value="F:metal ion binding"/>
    <property type="evidence" value="ECO:0007669"/>
    <property type="project" value="UniProtKB-KW"/>
</dbReference>
<dbReference type="GO" id="GO:0000917">
    <property type="term" value="P:division septum assembly"/>
    <property type="evidence" value="ECO:0007669"/>
    <property type="project" value="UniProtKB-KW"/>
</dbReference>
<dbReference type="CDD" id="cd01876">
    <property type="entry name" value="YihA_EngB"/>
    <property type="match status" value="1"/>
</dbReference>
<dbReference type="FunFam" id="3.40.50.300:FF:000098">
    <property type="entry name" value="Probable GTP-binding protein EngB"/>
    <property type="match status" value="1"/>
</dbReference>
<dbReference type="Gene3D" id="3.40.50.300">
    <property type="entry name" value="P-loop containing nucleotide triphosphate hydrolases"/>
    <property type="match status" value="1"/>
</dbReference>
<dbReference type="HAMAP" id="MF_00321">
    <property type="entry name" value="GTPase_EngB"/>
    <property type="match status" value="1"/>
</dbReference>
<dbReference type="InterPro" id="IPR030393">
    <property type="entry name" value="G_ENGB_dom"/>
</dbReference>
<dbReference type="InterPro" id="IPR006073">
    <property type="entry name" value="GTP-bd"/>
</dbReference>
<dbReference type="InterPro" id="IPR019987">
    <property type="entry name" value="GTP-bd_ribosome_bio_YsxC"/>
</dbReference>
<dbReference type="InterPro" id="IPR027417">
    <property type="entry name" value="P-loop_NTPase"/>
</dbReference>
<dbReference type="NCBIfam" id="TIGR03598">
    <property type="entry name" value="GTPase_YsxC"/>
    <property type="match status" value="1"/>
</dbReference>
<dbReference type="PANTHER" id="PTHR11649:SF13">
    <property type="entry name" value="ENGB-TYPE G DOMAIN-CONTAINING PROTEIN"/>
    <property type="match status" value="1"/>
</dbReference>
<dbReference type="PANTHER" id="PTHR11649">
    <property type="entry name" value="MSS1/TRME-RELATED GTP-BINDING PROTEIN"/>
    <property type="match status" value="1"/>
</dbReference>
<dbReference type="Pfam" id="PF01926">
    <property type="entry name" value="MMR_HSR1"/>
    <property type="match status" value="1"/>
</dbReference>
<dbReference type="SUPFAM" id="SSF52540">
    <property type="entry name" value="P-loop containing nucleoside triphosphate hydrolases"/>
    <property type="match status" value="1"/>
</dbReference>
<dbReference type="PROSITE" id="PS51706">
    <property type="entry name" value="G_ENGB"/>
    <property type="match status" value="1"/>
</dbReference>
<protein>
    <recommendedName>
        <fullName evidence="1">Probable GTP-binding protein EngB</fullName>
    </recommendedName>
</protein>
<accession>Q3KKA7</accession>
<proteinExistence type="inferred from homology"/>
<keyword id="KW-0131">Cell cycle</keyword>
<keyword id="KW-0132">Cell division</keyword>
<keyword id="KW-0342">GTP-binding</keyword>
<keyword id="KW-0460">Magnesium</keyword>
<keyword id="KW-0479">Metal-binding</keyword>
<keyword id="KW-0547">Nucleotide-binding</keyword>
<keyword id="KW-0717">Septation</keyword>
<feature type="chain" id="PRO_0000266920" description="Probable GTP-binding protein EngB">
    <location>
        <begin position="1"/>
        <end position="214"/>
    </location>
</feature>
<feature type="domain" description="EngB-type G" evidence="1">
    <location>
        <begin position="30"/>
        <end position="204"/>
    </location>
</feature>
<feature type="binding site" evidence="1">
    <location>
        <begin position="38"/>
        <end position="45"/>
    </location>
    <ligand>
        <name>GTP</name>
        <dbReference type="ChEBI" id="CHEBI:37565"/>
    </ligand>
</feature>
<feature type="binding site" evidence="1">
    <location>
        <position position="45"/>
    </location>
    <ligand>
        <name>Mg(2+)</name>
        <dbReference type="ChEBI" id="CHEBI:18420"/>
    </ligand>
</feature>
<feature type="binding site" evidence="1">
    <location>
        <begin position="64"/>
        <end position="68"/>
    </location>
    <ligand>
        <name>GTP</name>
        <dbReference type="ChEBI" id="CHEBI:37565"/>
    </ligand>
</feature>
<feature type="binding site" evidence="1">
    <location>
        <position position="66"/>
    </location>
    <ligand>
        <name>Mg(2+)</name>
        <dbReference type="ChEBI" id="CHEBI:18420"/>
    </ligand>
</feature>
<feature type="binding site" evidence="1">
    <location>
        <begin position="82"/>
        <end position="85"/>
    </location>
    <ligand>
        <name>GTP</name>
        <dbReference type="ChEBI" id="CHEBI:37565"/>
    </ligand>
</feature>
<feature type="binding site" evidence="1">
    <location>
        <begin position="149"/>
        <end position="152"/>
    </location>
    <ligand>
        <name>GTP</name>
        <dbReference type="ChEBI" id="CHEBI:37565"/>
    </ligand>
</feature>
<feature type="binding site" evidence="1">
    <location>
        <begin position="182"/>
        <end position="185"/>
    </location>
    <ligand>
        <name>GTP</name>
        <dbReference type="ChEBI" id="CHEBI:37565"/>
    </ligand>
</feature>
<name>ENGB_PSEPF</name>